<gene>
    <name type="ordered locus">HI_1632</name>
</gene>
<proteinExistence type="uncertain"/>
<protein>
    <recommendedName>
        <fullName>Putative inactive aspartokinase 3 HI_1632</fullName>
    </recommendedName>
</protein>
<feature type="chain" id="PRO_0000066691" description="Putative inactive aspartokinase 3 HI_1632">
    <location>
        <begin position="1"/>
        <end position="121"/>
    </location>
</feature>
<name>Y1632_HAEIN</name>
<organism>
    <name type="scientific">Haemophilus influenzae (strain ATCC 51907 / DSM 11121 / KW20 / Rd)</name>
    <dbReference type="NCBI Taxonomy" id="71421"/>
    <lineage>
        <taxon>Bacteria</taxon>
        <taxon>Pseudomonadati</taxon>
        <taxon>Pseudomonadota</taxon>
        <taxon>Gammaproteobacteria</taxon>
        <taxon>Pasteurellales</taxon>
        <taxon>Pasteurellaceae</taxon>
        <taxon>Haemophilus</taxon>
    </lineage>
</organism>
<reference key="1">
    <citation type="journal article" date="1995" name="Science">
        <title>Whole-genome random sequencing and assembly of Haemophilus influenzae Rd.</title>
        <authorList>
            <person name="Fleischmann R.D."/>
            <person name="Adams M.D."/>
            <person name="White O."/>
            <person name="Clayton R.A."/>
            <person name="Kirkness E.F."/>
            <person name="Kerlavage A.R."/>
            <person name="Bult C.J."/>
            <person name="Tomb J.-F."/>
            <person name="Dougherty B.A."/>
            <person name="Merrick J.M."/>
            <person name="McKenney K."/>
            <person name="Sutton G.G."/>
            <person name="FitzHugh W."/>
            <person name="Fields C.A."/>
            <person name="Gocayne J.D."/>
            <person name="Scott J.D."/>
            <person name="Shirley R."/>
            <person name="Liu L.-I."/>
            <person name="Glodek A."/>
            <person name="Kelley J.M."/>
            <person name="Weidman J.F."/>
            <person name="Phillips C.A."/>
            <person name="Spriggs T."/>
            <person name="Hedblom E."/>
            <person name="Cotton M.D."/>
            <person name="Utterback T.R."/>
            <person name="Hanna M.C."/>
            <person name="Nguyen D.T."/>
            <person name="Saudek D.M."/>
            <person name="Brandon R.C."/>
            <person name="Fine L.D."/>
            <person name="Fritchman J.L."/>
            <person name="Fuhrmann J.L."/>
            <person name="Geoghagen N.S.M."/>
            <person name="Gnehm C.L."/>
            <person name="McDonald L.A."/>
            <person name="Small K.V."/>
            <person name="Fraser C.M."/>
            <person name="Smith H.O."/>
            <person name="Venter J.C."/>
        </authorList>
    </citation>
    <scope>NUCLEOTIDE SEQUENCE [LARGE SCALE GENOMIC DNA]</scope>
    <source>
        <strain>ATCC 51907 / DSM 11121 / KW20 / Rd</strain>
    </source>
</reference>
<comment type="similarity">
    <text evidence="1">Belongs to the aspartokinase family.</text>
</comment>
<comment type="caution">
    <text evidence="1">Could be the product of a pseudogene. This protein lacks the central 330 residues found in AKIII, including a number of amino acids known to be important for function in E.coli.</text>
</comment>
<accession>Q57525</accession>
<accession>O05078</accession>
<evidence type="ECO:0000305" key="1"/>
<dbReference type="EMBL" id="L42023">
    <property type="protein sequence ID" value="AAC23284.1"/>
    <property type="molecule type" value="Genomic_DNA"/>
</dbReference>
<dbReference type="PIR" id="F64133">
    <property type="entry name" value="F64133"/>
</dbReference>
<dbReference type="RefSeq" id="NP_439774.1">
    <property type="nucleotide sequence ID" value="NC_000907.1"/>
</dbReference>
<dbReference type="SMR" id="Q57525"/>
<dbReference type="STRING" id="71421.HI_1632"/>
<dbReference type="DNASU" id="950850"/>
<dbReference type="EnsemblBacteria" id="AAC23284">
    <property type="protein sequence ID" value="AAC23284"/>
    <property type="gene ID" value="HI_1632"/>
</dbReference>
<dbReference type="KEGG" id="hin:HI_1632"/>
<dbReference type="PATRIC" id="fig|71421.8.peg.1707"/>
<dbReference type="eggNOG" id="COG0527">
    <property type="taxonomic scope" value="Bacteria"/>
</dbReference>
<dbReference type="HOGENOM" id="CLU_2034793_0_0_6"/>
<dbReference type="OrthoDB" id="9799110at2"/>
<dbReference type="BioCyc" id="HINF71421:G1GJ1-1649-MONOMER"/>
<dbReference type="Proteomes" id="UP000000579">
    <property type="component" value="Chromosome"/>
</dbReference>
<dbReference type="GO" id="GO:0004072">
    <property type="term" value="F:aspartate kinase activity"/>
    <property type="evidence" value="ECO:0007669"/>
    <property type="project" value="InterPro"/>
</dbReference>
<dbReference type="GO" id="GO:0008652">
    <property type="term" value="P:amino acid biosynthetic process"/>
    <property type="evidence" value="ECO:0007669"/>
    <property type="project" value="InterPro"/>
</dbReference>
<dbReference type="CDD" id="cd04917">
    <property type="entry name" value="ACT_AKiii-LysC-EC_2"/>
    <property type="match status" value="1"/>
</dbReference>
<dbReference type="Gene3D" id="3.40.1160.10">
    <property type="entry name" value="Acetylglutamate kinase-like"/>
    <property type="match status" value="1"/>
</dbReference>
<dbReference type="Gene3D" id="1.20.120.1320">
    <property type="entry name" value="Aspartokinase, catalytic domain"/>
    <property type="match status" value="1"/>
</dbReference>
<dbReference type="InterPro" id="IPR036393">
    <property type="entry name" value="AceGlu_kinase-like_sf"/>
</dbReference>
<dbReference type="InterPro" id="IPR054352">
    <property type="entry name" value="ACT_Aspartokinase"/>
</dbReference>
<dbReference type="InterPro" id="IPR042199">
    <property type="entry name" value="AsparK_Bifunc_asparK/hSer_DH"/>
</dbReference>
<dbReference type="InterPro" id="IPR018042">
    <property type="entry name" value="Aspartate_kinase_CS"/>
</dbReference>
<dbReference type="InterPro" id="IPR047962">
    <property type="entry name" value="LysC_ACT_2"/>
</dbReference>
<dbReference type="PANTHER" id="PTHR21499">
    <property type="entry name" value="ASPARTATE KINASE"/>
    <property type="match status" value="1"/>
</dbReference>
<dbReference type="PANTHER" id="PTHR21499:SF59">
    <property type="entry name" value="ASPARTOKINASE"/>
    <property type="match status" value="1"/>
</dbReference>
<dbReference type="Pfam" id="PF22468">
    <property type="entry name" value="ACT_9"/>
    <property type="match status" value="1"/>
</dbReference>
<dbReference type="SUPFAM" id="SSF53633">
    <property type="entry name" value="Carbamate kinase-like"/>
    <property type="match status" value="1"/>
</dbReference>
<dbReference type="PROSITE" id="PS00324">
    <property type="entry name" value="ASPARTOKINASE"/>
    <property type="match status" value="1"/>
</dbReference>
<keyword id="KW-1185">Reference proteome</keyword>
<sequence>MPYLSVAKFGGTSVANHDAMTACAKIVIADPNTRVVVLSASAGVTNLLVALANGVKATEREKLIGNDLHITSGVAKRIFDTVQSYNVRMISYGASTNNVCMLVQSEHSDEIVRSLHKSLFE</sequence>